<accession>Q5V2T4</accession>
<comment type="function">
    <text evidence="1">Involved in allosteric regulation of aspartate carbamoyltransferase.</text>
</comment>
<comment type="cofactor">
    <cofactor evidence="1">
        <name>Zn(2+)</name>
        <dbReference type="ChEBI" id="CHEBI:29105"/>
    </cofactor>
    <text evidence="1">Binds 1 zinc ion per subunit.</text>
</comment>
<comment type="subunit">
    <text evidence="1">Contains catalytic and regulatory chains.</text>
</comment>
<comment type="similarity">
    <text evidence="1">Belongs to the PyrI family.</text>
</comment>
<gene>
    <name evidence="1" type="primary">pyrI</name>
    <name type="ordered locus">rrnAC1224</name>
</gene>
<feature type="chain" id="PRO_0000142328" description="Aspartate carbamoyltransferase regulatory chain">
    <location>
        <begin position="1"/>
        <end position="155"/>
    </location>
</feature>
<feature type="binding site" evidence="1">
    <location>
        <position position="111"/>
    </location>
    <ligand>
        <name>Zn(2+)</name>
        <dbReference type="ChEBI" id="CHEBI:29105"/>
    </ligand>
</feature>
<feature type="binding site" evidence="1">
    <location>
        <position position="116"/>
    </location>
    <ligand>
        <name>Zn(2+)</name>
        <dbReference type="ChEBI" id="CHEBI:29105"/>
    </ligand>
</feature>
<feature type="binding site" evidence="1">
    <location>
        <position position="137"/>
    </location>
    <ligand>
        <name>Zn(2+)</name>
        <dbReference type="ChEBI" id="CHEBI:29105"/>
    </ligand>
</feature>
<feature type="binding site" evidence="1">
    <location>
        <position position="140"/>
    </location>
    <ligand>
        <name>Zn(2+)</name>
        <dbReference type="ChEBI" id="CHEBI:29105"/>
    </ligand>
</feature>
<protein>
    <recommendedName>
        <fullName evidence="1">Aspartate carbamoyltransferase regulatory chain</fullName>
    </recommendedName>
</protein>
<sequence length="155" mass="16763">MSDNDQQLRVSKIQNGTVIDHIAGGQALNVLAILGIDGTSGDSVSVAMNMPSDRLGHKDVVKVEGRELSQNEVDVLSLIAPAATINIIRDYEVVEKGRVERPSVVEGVLECPNHNCITTENEPVDSRFAVGDDGVRCEYCDTIIRDDLPAHILAE</sequence>
<evidence type="ECO:0000255" key="1">
    <source>
        <dbReference type="HAMAP-Rule" id="MF_00002"/>
    </source>
</evidence>
<name>PYRI_HALMA</name>
<proteinExistence type="inferred from homology"/>
<organism>
    <name type="scientific">Haloarcula marismortui (strain ATCC 43049 / DSM 3752 / JCM 8966 / VKM B-1809)</name>
    <name type="common">Halobacterium marismortui</name>
    <dbReference type="NCBI Taxonomy" id="272569"/>
    <lineage>
        <taxon>Archaea</taxon>
        <taxon>Methanobacteriati</taxon>
        <taxon>Methanobacteriota</taxon>
        <taxon>Stenosarchaea group</taxon>
        <taxon>Halobacteria</taxon>
        <taxon>Halobacteriales</taxon>
        <taxon>Haloarculaceae</taxon>
        <taxon>Haloarcula</taxon>
    </lineage>
</organism>
<reference key="1">
    <citation type="journal article" date="2004" name="Genome Res.">
        <title>Genome sequence of Haloarcula marismortui: a halophilic archaeon from the Dead Sea.</title>
        <authorList>
            <person name="Baliga N.S."/>
            <person name="Bonneau R."/>
            <person name="Facciotti M.T."/>
            <person name="Pan M."/>
            <person name="Glusman G."/>
            <person name="Deutsch E.W."/>
            <person name="Shannon P."/>
            <person name="Chiu Y."/>
            <person name="Weng R.S."/>
            <person name="Gan R.R."/>
            <person name="Hung P."/>
            <person name="Date S.V."/>
            <person name="Marcotte E."/>
            <person name="Hood L."/>
            <person name="Ng W.V."/>
        </authorList>
    </citation>
    <scope>NUCLEOTIDE SEQUENCE [LARGE SCALE GENOMIC DNA]</scope>
    <source>
        <strain>ATCC 43049 / DSM 3752 / JCM 8966 / VKM B-1809</strain>
    </source>
</reference>
<dbReference type="EMBL" id="AY596297">
    <property type="protein sequence ID" value="AAV46168.1"/>
    <property type="molecule type" value="Genomic_DNA"/>
</dbReference>
<dbReference type="RefSeq" id="WP_004960695.1">
    <property type="nucleotide sequence ID" value="NZ_CP039138.1"/>
</dbReference>
<dbReference type="SMR" id="Q5V2T4"/>
<dbReference type="STRING" id="272569.rrnAC1224"/>
<dbReference type="PaxDb" id="272569-rrnAC1224"/>
<dbReference type="EnsemblBacteria" id="AAV46168">
    <property type="protein sequence ID" value="AAV46168"/>
    <property type="gene ID" value="rrnAC1224"/>
</dbReference>
<dbReference type="GeneID" id="64822161"/>
<dbReference type="KEGG" id="hma:rrnAC1224"/>
<dbReference type="PATRIC" id="fig|272569.17.peg.1935"/>
<dbReference type="eggNOG" id="arCOG04229">
    <property type="taxonomic scope" value="Archaea"/>
</dbReference>
<dbReference type="HOGENOM" id="CLU_128576_0_0_2"/>
<dbReference type="Proteomes" id="UP000001169">
    <property type="component" value="Chromosome I"/>
</dbReference>
<dbReference type="GO" id="GO:0009347">
    <property type="term" value="C:aspartate carbamoyltransferase complex"/>
    <property type="evidence" value="ECO:0007669"/>
    <property type="project" value="InterPro"/>
</dbReference>
<dbReference type="GO" id="GO:0046872">
    <property type="term" value="F:metal ion binding"/>
    <property type="evidence" value="ECO:0007669"/>
    <property type="project" value="UniProtKB-KW"/>
</dbReference>
<dbReference type="GO" id="GO:0006207">
    <property type="term" value="P:'de novo' pyrimidine nucleobase biosynthetic process"/>
    <property type="evidence" value="ECO:0007669"/>
    <property type="project" value="InterPro"/>
</dbReference>
<dbReference type="GO" id="GO:0006221">
    <property type="term" value="P:pyrimidine nucleotide biosynthetic process"/>
    <property type="evidence" value="ECO:0007669"/>
    <property type="project" value="UniProtKB-UniRule"/>
</dbReference>
<dbReference type="Gene3D" id="2.30.30.20">
    <property type="entry name" value="Aspartate carbamoyltransferase regulatory subunit, C-terminal domain"/>
    <property type="match status" value="1"/>
</dbReference>
<dbReference type="Gene3D" id="3.30.70.140">
    <property type="entry name" value="Aspartate carbamoyltransferase regulatory subunit, N-terminal domain"/>
    <property type="match status" value="1"/>
</dbReference>
<dbReference type="HAMAP" id="MF_00002">
    <property type="entry name" value="Asp_carb_tr_reg"/>
    <property type="match status" value="1"/>
</dbReference>
<dbReference type="InterPro" id="IPR020545">
    <property type="entry name" value="Asp_carbamoyltransf_reg_N"/>
</dbReference>
<dbReference type="InterPro" id="IPR002801">
    <property type="entry name" value="Asp_carbamoylTrfase_reg"/>
</dbReference>
<dbReference type="InterPro" id="IPR020542">
    <property type="entry name" value="Asp_carbamoyltrfase_reg_C"/>
</dbReference>
<dbReference type="InterPro" id="IPR036792">
    <property type="entry name" value="Asp_carbatrfase_reg_C_sf"/>
</dbReference>
<dbReference type="InterPro" id="IPR036793">
    <property type="entry name" value="Asp_carbatrfase_reg_N_sf"/>
</dbReference>
<dbReference type="NCBIfam" id="TIGR00240">
    <property type="entry name" value="ATCase_reg"/>
    <property type="match status" value="1"/>
</dbReference>
<dbReference type="PANTHER" id="PTHR35805">
    <property type="entry name" value="ASPARTATE CARBAMOYLTRANSFERASE REGULATORY CHAIN"/>
    <property type="match status" value="1"/>
</dbReference>
<dbReference type="PANTHER" id="PTHR35805:SF1">
    <property type="entry name" value="ASPARTATE CARBAMOYLTRANSFERASE REGULATORY CHAIN"/>
    <property type="match status" value="1"/>
</dbReference>
<dbReference type="Pfam" id="PF01948">
    <property type="entry name" value="PyrI"/>
    <property type="match status" value="1"/>
</dbReference>
<dbReference type="Pfam" id="PF02748">
    <property type="entry name" value="PyrI_C"/>
    <property type="match status" value="1"/>
</dbReference>
<dbReference type="SUPFAM" id="SSF57825">
    <property type="entry name" value="Aspartate carbamoyltransferase, Regulatory-chain, C-terminal domain"/>
    <property type="match status" value="1"/>
</dbReference>
<dbReference type="SUPFAM" id="SSF54893">
    <property type="entry name" value="Aspartate carbamoyltransferase, Regulatory-chain, N-terminal domain"/>
    <property type="match status" value="1"/>
</dbReference>
<keyword id="KW-0479">Metal-binding</keyword>
<keyword id="KW-0665">Pyrimidine biosynthesis</keyword>
<keyword id="KW-1185">Reference proteome</keyword>
<keyword id="KW-0862">Zinc</keyword>